<sequence length="146" mass="17002">MSEIKRLEINYKTDELFENFRAFGNKDLYMVNELNGQMIDASSDSPFYGIFVGDQLGARMALLKKGDVEEIYFPDFEDYILLWKLEVLPKYQNRGYASELIDFAKSFNMPIKAIGRNDSKDFFLHHGFTDVEAKNIEGHDVLLWKP</sequence>
<keyword id="KW-0012">Acyltransferase</keyword>
<keyword id="KW-0808">Transferase</keyword>
<feature type="chain" id="PRO_0000232482" description="Uncharacterized N-acetyltransferase SACOL1189">
    <location>
        <begin position="1"/>
        <end position="146"/>
    </location>
</feature>
<feature type="domain" description="N-acetyltransferase">
    <location>
        <begin position="7"/>
        <end position="146"/>
    </location>
</feature>
<accession>Q5HGQ5</accession>
<gene>
    <name type="ordered locus">SACOL1189</name>
</gene>
<protein>
    <recommendedName>
        <fullName>Uncharacterized N-acetyltransferase SACOL1189</fullName>
        <ecNumber>2.3.1.-</ecNumber>
    </recommendedName>
</protein>
<name>Y1189_STAAC</name>
<dbReference type="EC" id="2.3.1.-"/>
<dbReference type="EMBL" id="CP000046">
    <property type="protein sequence ID" value="AAW36568.1"/>
    <property type="molecule type" value="Genomic_DNA"/>
</dbReference>
<dbReference type="RefSeq" id="WP_001289711.1">
    <property type="nucleotide sequence ID" value="NZ_JBGOFO010000002.1"/>
</dbReference>
<dbReference type="SMR" id="Q5HGQ5"/>
<dbReference type="KEGG" id="sac:SACOL1189"/>
<dbReference type="HOGENOM" id="CLU_136634_0_0_9"/>
<dbReference type="Proteomes" id="UP000000530">
    <property type="component" value="Chromosome"/>
</dbReference>
<dbReference type="GO" id="GO:0016747">
    <property type="term" value="F:acyltransferase activity, transferring groups other than amino-acyl groups"/>
    <property type="evidence" value="ECO:0007669"/>
    <property type="project" value="UniProtKB-UniRule"/>
</dbReference>
<dbReference type="CDD" id="cd04301">
    <property type="entry name" value="NAT_SF"/>
    <property type="match status" value="1"/>
</dbReference>
<dbReference type="Gene3D" id="3.40.630.30">
    <property type="match status" value="1"/>
</dbReference>
<dbReference type="HAMAP" id="MF_00824">
    <property type="entry name" value="Acetyltransf_YlbP"/>
    <property type="match status" value="1"/>
</dbReference>
<dbReference type="InterPro" id="IPR016181">
    <property type="entry name" value="Acyl_CoA_acyltransferase"/>
</dbReference>
<dbReference type="InterPro" id="IPR000182">
    <property type="entry name" value="GNAT_dom"/>
</dbReference>
<dbReference type="InterPro" id="IPR017274">
    <property type="entry name" value="YlbP"/>
</dbReference>
<dbReference type="NCBIfam" id="NF010241">
    <property type="entry name" value="PRK13688.1"/>
    <property type="match status" value="1"/>
</dbReference>
<dbReference type="PIRSF" id="PIRSF037732">
    <property type="entry name" value="YlbP_prd"/>
    <property type="match status" value="1"/>
</dbReference>
<dbReference type="SUPFAM" id="SSF55729">
    <property type="entry name" value="Acyl-CoA N-acyltransferases (Nat)"/>
    <property type="match status" value="1"/>
</dbReference>
<dbReference type="PROSITE" id="PS51186">
    <property type="entry name" value="GNAT"/>
    <property type="match status" value="1"/>
</dbReference>
<reference key="1">
    <citation type="journal article" date="2005" name="J. Bacteriol.">
        <title>Insights on evolution of virulence and resistance from the complete genome analysis of an early methicillin-resistant Staphylococcus aureus strain and a biofilm-producing methicillin-resistant Staphylococcus epidermidis strain.</title>
        <authorList>
            <person name="Gill S.R."/>
            <person name="Fouts D.E."/>
            <person name="Archer G.L."/>
            <person name="Mongodin E.F."/>
            <person name="DeBoy R.T."/>
            <person name="Ravel J."/>
            <person name="Paulsen I.T."/>
            <person name="Kolonay J.F."/>
            <person name="Brinkac L.M."/>
            <person name="Beanan M.J."/>
            <person name="Dodson R.J."/>
            <person name="Daugherty S.C."/>
            <person name="Madupu R."/>
            <person name="Angiuoli S.V."/>
            <person name="Durkin A.S."/>
            <person name="Haft D.H."/>
            <person name="Vamathevan J.J."/>
            <person name="Khouri H."/>
            <person name="Utterback T.R."/>
            <person name="Lee C."/>
            <person name="Dimitrov G."/>
            <person name="Jiang L."/>
            <person name="Qin H."/>
            <person name="Weidman J."/>
            <person name="Tran K."/>
            <person name="Kang K.H."/>
            <person name="Hance I.R."/>
            <person name="Nelson K.E."/>
            <person name="Fraser C.M."/>
        </authorList>
    </citation>
    <scope>NUCLEOTIDE SEQUENCE [LARGE SCALE GENOMIC DNA]</scope>
    <source>
        <strain>COL</strain>
    </source>
</reference>
<proteinExistence type="inferred from homology"/>
<organism>
    <name type="scientific">Staphylococcus aureus (strain COL)</name>
    <dbReference type="NCBI Taxonomy" id="93062"/>
    <lineage>
        <taxon>Bacteria</taxon>
        <taxon>Bacillati</taxon>
        <taxon>Bacillota</taxon>
        <taxon>Bacilli</taxon>
        <taxon>Bacillales</taxon>
        <taxon>Staphylococcaceae</taxon>
        <taxon>Staphylococcus</taxon>
    </lineage>
</organism>